<reference key="1">
    <citation type="journal article" date="2005" name="Science">
        <title>Genome sequence of the PCE-dechlorinating bacterium Dehalococcoides ethenogenes.</title>
        <authorList>
            <person name="Seshadri R."/>
            <person name="Adrian L."/>
            <person name="Fouts D.E."/>
            <person name="Eisen J.A."/>
            <person name="Phillippy A.M."/>
            <person name="Methe B.A."/>
            <person name="Ward N.L."/>
            <person name="Nelson W.C."/>
            <person name="DeBoy R.T."/>
            <person name="Khouri H.M."/>
            <person name="Kolonay J.F."/>
            <person name="Dodson R.J."/>
            <person name="Daugherty S.C."/>
            <person name="Brinkac L.M."/>
            <person name="Sullivan S.A."/>
            <person name="Madupu R."/>
            <person name="Nelson K.E."/>
            <person name="Kang K.H."/>
            <person name="Impraim M."/>
            <person name="Tran K."/>
            <person name="Robinson J.M."/>
            <person name="Forberger H.A."/>
            <person name="Fraser C.M."/>
            <person name="Zinder S.H."/>
            <person name="Heidelberg J.F."/>
        </authorList>
    </citation>
    <scope>NUCLEOTIDE SEQUENCE [LARGE SCALE GENOMIC DNA]</scope>
    <source>
        <strain>ATCC BAA-2266 / KCTC 15142 / 195</strain>
    </source>
</reference>
<protein>
    <recommendedName>
        <fullName evidence="1">Nitrogenase iron protein</fullName>
        <ecNumber evidence="1">1.18.6.1</ecNumber>
    </recommendedName>
    <alternativeName>
        <fullName evidence="1">Nitrogenase Fe protein</fullName>
    </alternativeName>
    <alternativeName>
        <fullName evidence="1">Nitrogenase component II</fullName>
    </alternativeName>
    <alternativeName>
        <fullName evidence="1">Nitrogenase reductase</fullName>
    </alternativeName>
</protein>
<sequence>MRKVAIYGKGGIGKSTTTQNTVAALAEMGRKVLVVGCDPKADSTRLLLGGLAQKTVLDTLREEGEDVELDLVRKTGFGNTLCVESGGPEPGVGCAGRGIITAVNLMEQLGGYESDSPLDYVFYDVLGDVVCGGFAMPIREGKAEEVYIVCSGEMMAMYAANNICKGIRKFADAGSVKLGGLICNSRMVDNEKEMIAEFAKRLGTQMIHFVPRDNDVQRAEINKKTVIEWNPQAKQADEYRALAKAIDNNQMFVVPKPISVDELESLLVEFGVIS</sequence>
<keyword id="KW-0004">4Fe-4S</keyword>
<keyword id="KW-0013">ADP-ribosylation</keyword>
<keyword id="KW-0067">ATP-binding</keyword>
<keyword id="KW-0408">Iron</keyword>
<keyword id="KW-0411">Iron-sulfur</keyword>
<keyword id="KW-0479">Metal-binding</keyword>
<keyword id="KW-0535">Nitrogen fixation</keyword>
<keyword id="KW-0547">Nucleotide-binding</keyword>
<keyword id="KW-0560">Oxidoreductase</keyword>
<comment type="function">
    <text evidence="1">The key enzymatic reactions in nitrogen fixation are catalyzed by the nitrogenase complex, which has 2 components: the iron protein and the molybdenum-iron protein.</text>
</comment>
<comment type="catalytic activity">
    <reaction evidence="1">
        <text>N2 + 8 reduced [2Fe-2S]-[ferredoxin] + 16 ATP + 16 H2O = H2 + 8 oxidized [2Fe-2S]-[ferredoxin] + 2 NH4(+) + 16 ADP + 16 phosphate + 6 H(+)</text>
        <dbReference type="Rhea" id="RHEA:21448"/>
        <dbReference type="Rhea" id="RHEA-COMP:10000"/>
        <dbReference type="Rhea" id="RHEA-COMP:10001"/>
        <dbReference type="ChEBI" id="CHEBI:15377"/>
        <dbReference type="ChEBI" id="CHEBI:15378"/>
        <dbReference type="ChEBI" id="CHEBI:17997"/>
        <dbReference type="ChEBI" id="CHEBI:18276"/>
        <dbReference type="ChEBI" id="CHEBI:28938"/>
        <dbReference type="ChEBI" id="CHEBI:30616"/>
        <dbReference type="ChEBI" id="CHEBI:33737"/>
        <dbReference type="ChEBI" id="CHEBI:33738"/>
        <dbReference type="ChEBI" id="CHEBI:43474"/>
        <dbReference type="ChEBI" id="CHEBI:456216"/>
        <dbReference type="EC" id="1.18.6.1"/>
    </reaction>
</comment>
<comment type="cofactor">
    <cofactor evidence="1">
        <name>[4Fe-4S] cluster</name>
        <dbReference type="ChEBI" id="CHEBI:49883"/>
    </cofactor>
    <text evidence="1">Binds 1 [4Fe-4S] cluster per dimer.</text>
</comment>
<comment type="subunit">
    <text evidence="1">Homodimer.</text>
</comment>
<comment type="PTM">
    <text evidence="1">The reversible ADP-ribosylation of Arg-97 inactivates the nitrogenase reductase and regulates nitrogenase activity.</text>
</comment>
<comment type="similarity">
    <text evidence="1">Belongs to the NifH/BchL/ChlL family.</text>
</comment>
<evidence type="ECO:0000255" key="1">
    <source>
        <dbReference type="HAMAP-Rule" id="MF_00533"/>
    </source>
</evidence>
<gene>
    <name evidence="1" type="primary">nifH</name>
    <name type="ordered locus">DET1158</name>
</gene>
<feature type="chain" id="PRO_1000211862" description="Nitrogenase iron protein">
    <location>
        <begin position="1"/>
        <end position="274"/>
    </location>
</feature>
<feature type="binding site" evidence="1">
    <location>
        <begin position="8"/>
        <end position="15"/>
    </location>
    <ligand>
        <name>ATP</name>
        <dbReference type="ChEBI" id="CHEBI:30616"/>
    </ligand>
</feature>
<feature type="binding site" evidence="1">
    <location>
        <position position="94"/>
    </location>
    <ligand>
        <name>[4Fe-4S] cluster</name>
        <dbReference type="ChEBI" id="CHEBI:49883"/>
        <note>ligand shared between dimeric partners</note>
    </ligand>
</feature>
<feature type="binding site" evidence="1">
    <location>
        <position position="131"/>
    </location>
    <ligand>
        <name>[4Fe-4S] cluster</name>
        <dbReference type="ChEBI" id="CHEBI:49883"/>
        <note>ligand shared between dimeric partners</note>
    </ligand>
</feature>
<feature type="modified residue" description="ADP-ribosylarginine; by dinitrogenase reductase ADP-ribosyltransferase" evidence="1">
    <location>
        <position position="97"/>
    </location>
</feature>
<accession>Q3Z7C7</accession>
<organism>
    <name type="scientific">Dehalococcoides mccartyi (strain ATCC BAA-2266 / KCTC 15142 / 195)</name>
    <name type="common">Dehalococcoides ethenogenes (strain 195)</name>
    <dbReference type="NCBI Taxonomy" id="243164"/>
    <lineage>
        <taxon>Bacteria</taxon>
        <taxon>Bacillati</taxon>
        <taxon>Chloroflexota</taxon>
        <taxon>Dehalococcoidia</taxon>
        <taxon>Dehalococcoidales</taxon>
        <taxon>Dehalococcoidaceae</taxon>
        <taxon>Dehalococcoides</taxon>
    </lineage>
</organism>
<dbReference type="EC" id="1.18.6.1" evidence="1"/>
<dbReference type="EMBL" id="CP000027">
    <property type="protein sequence ID" value="AAW39625.1"/>
    <property type="molecule type" value="Genomic_DNA"/>
</dbReference>
<dbReference type="RefSeq" id="WP_010936850.1">
    <property type="nucleotide sequence ID" value="NC_002936.3"/>
</dbReference>
<dbReference type="SMR" id="Q3Z7C7"/>
<dbReference type="FunCoup" id="Q3Z7C7">
    <property type="interactions" value="192"/>
</dbReference>
<dbReference type="STRING" id="243164.DET1158"/>
<dbReference type="GeneID" id="3229586"/>
<dbReference type="KEGG" id="det:DET1158"/>
<dbReference type="eggNOG" id="COG1348">
    <property type="taxonomic scope" value="Bacteria"/>
</dbReference>
<dbReference type="HOGENOM" id="CLU_059373_0_0_0"/>
<dbReference type="InParanoid" id="Q3Z7C7"/>
<dbReference type="Proteomes" id="UP000008289">
    <property type="component" value="Chromosome"/>
</dbReference>
<dbReference type="GO" id="GO:0051539">
    <property type="term" value="F:4 iron, 4 sulfur cluster binding"/>
    <property type="evidence" value="ECO:0007669"/>
    <property type="project" value="UniProtKB-KW"/>
</dbReference>
<dbReference type="GO" id="GO:0005524">
    <property type="term" value="F:ATP binding"/>
    <property type="evidence" value="ECO:0007669"/>
    <property type="project" value="UniProtKB-UniRule"/>
</dbReference>
<dbReference type="GO" id="GO:0046872">
    <property type="term" value="F:metal ion binding"/>
    <property type="evidence" value="ECO:0007669"/>
    <property type="project" value="UniProtKB-KW"/>
</dbReference>
<dbReference type="GO" id="GO:0016163">
    <property type="term" value="F:nitrogenase activity"/>
    <property type="evidence" value="ECO:0007669"/>
    <property type="project" value="UniProtKB-UniRule"/>
</dbReference>
<dbReference type="GO" id="GO:0009399">
    <property type="term" value="P:nitrogen fixation"/>
    <property type="evidence" value="ECO:0007669"/>
    <property type="project" value="UniProtKB-UniRule"/>
</dbReference>
<dbReference type="CDD" id="cd02040">
    <property type="entry name" value="NifH"/>
    <property type="match status" value="1"/>
</dbReference>
<dbReference type="Gene3D" id="3.40.50.300">
    <property type="entry name" value="P-loop containing nucleotide triphosphate hydrolases"/>
    <property type="match status" value="1"/>
</dbReference>
<dbReference type="HAMAP" id="MF_00533">
    <property type="entry name" value="NifH"/>
    <property type="match status" value="1"/>
</dbReference>
<dbReference type="InterPro" id="IPR030655">
    <property type="entry name" value="NifH/chlL_CS"/>
</dbReference>
<dbReference type="InterPro" id="IPR000392">
    <property type="entry name" value="NifH/frxC"/>
</dbReference>
<dbReference type="InterPro" id="IPR005977">
    <property type="entry name" value="Nitrogenase_Fe_NifH"/>
</dbReference>
<dbReference type="InterPro" id="IPR027417">
    <property type="entry name" value="P-loop_NTPase"/>
</dbReference>
<dbReference type="NCBIfam" id="TIGR01287">
    <property type="entry name" value="nifH"/>
    <property type="match status" value="1"/>
</dbReference>
<dbReference type="PANTHER" id="PTHR42864">
    <property type="entry name" value="LIGHT-INDEPENDENT PROTOCHLOROPHYLLIDE REDUCTASE IRON-SULFUR ATP-BINDING PROTEIN"/>
    <property type="match status" value="1"/>
</dbReference>
<dbReference type="PANTHER" id="PTHR42864:SF2">
    <property type="entry name" value="LIGHT-INDEPENDENT PROTOCHLOROPHYLLIDE REDUCTASE IRON-SULFUR ATP-BINDING PROTEIN"/>
    <property type="match status" value="1"/>
</dbReference>
<dbReference type="Pfam" id="PF00142">
    <property type="entry name" value="Fer4_NifH"/>
    <property type="match status" value="1"/>
</dbReference>
<dbReference type="PIRSF" id="PIRSF000363">
    <property type="entry name" value="Nitrogenase_iron"/>
    <property type="match status" value="1"/>
</dbReference>
<dbReference type="PRINTS" id="PR00091">
    <property type="entry name" value="NITROGNASEII"/>
</dbReference>
<dbReference type="SUPFAM" id="SSF52540">
    <property type="entry name" value="P-loop containing nucleoside triphosphate hydrolases"/>
    <property type="match status" value="1"/>
</dbReference>
<dbReference type="PROSITE" id="PS00746">
    <property type="entry name" value="NIFH_FRXC_1"/>
    <property type="match status" value="1"/>
</dbReference>
<dbReference type="PROSITE" id="PS00692">
    <property type="entry name" value="NIFH_FRXC_2"/>
    <property type="match status" value="1"/>
</dbReference>
<dbReference type="PROSITE" id="PS51026">
    <property type="entry name" value="NIFH_FRXC_3"/>
    <property type="match status" value="1"/>
</dbReference>
<name>NIFH_DEHM1</name>
<proteinExistence type="inferred from homology"/>